<accession>A7FI87</accession>
<proteinExistence type="inferred from homology"/>
<evidence type="ECO:0000255" key="1">
    <source>
        <dbReference type="HAMAP-Rule" id="MF_01232"/>
    </source>
</evidence>
<evidence type="ECO:0000256" key="2">
    <source>
        <dbReference type="SAM" id="MobiDB-lite"/>
    </source>
</evidence>
<protein>
    <recommendedName>
        <fullName evidence="1">UPF0229 protein YpsIP31758_1992</fullName>
    </recommendedName>
</protein>
<reference key="1">
    <citation type="journal article" date="2007" name="PLoS Genet.">
        <title>The complete genome sequence of Yersinia pseudotuberculosis IP31758, the causative agent of Far East scarlet-like fever.</title>
        <authorList>
            <person name="Eppinger M."/>
            <person name="Rosovitz M.J."/>
            <person name="Fricke W.F."/>
            <person name="Rasko D.A."/>
            <person name="Kokorina G."/>
            <person name="Fayolle C."/>
            <person name="Lindler L.E."/>
            <person name="Carniel E."/>
            <person name="Ravel J."/>
        </authorList>
    </citation>
    <scope>NUCLEOTIDE SEQUENCE [LARGE SCALE GENOMIC DNA]</scope>
    <source>
        <strain>IP 31758</strain>
    </source>
</reference>
<name>Y1992_YERP3</name>
<dbReference type="EMBL" id="CP000720">
    <property type="protein sequence ID" value="ABS49615.1"/>
    <property type="molecule type" value="Genomic_DNA"/>
</dbReference>
<dbReference type="RefSeq" id="WP_002216501.1">
    <property type="nucleotide sequence ID" value="NC_009708.1"/>
</dbReference>
<dbReference type="SMR" id="A7FI87"/>
<dbReference type="KEGG" id="ypi:YpsIP31758_1992"/>
<dbReference type="HOGENOM" id="CLU_049702_0_0_6"/>
<dbReference type="Proteomes" id="UP000002412">
    <property type="component" value="Chromosome"/>
</dbReference>
<dbReference type="HAMAP" id="MF_01232">
    <property type="entry name" value="UPF0229"/>
    <property type="match status" value="1"/>
</dbReference>
<dbReference type="InterPro" id="IPR006698">
    <property type="entry name" value="UPF0229"/>
</dbReference>
<dbReference type="NCBIfam" id="NF003707">
    <property type="entry name" value="PRK05325.1-2"/>
    <property type="match status" value="1"/>
</dbReference>
<dbReference type="NCBIfam" id="NF003708">
    <property type="entry name" value="PRK05325.1-3"/>
    <property type="match status" value="1"/>
</dbReference>
<dbReference type="PANTHER" id="PTHR30510">
    <property type="entry name" value="UPF0229 PROTEIN YEAH"/>
    <property type="match status" value="1"/>
</dbReference>
<dbReference type="PANTHER" id="PTHR30510:SF2">
    <property type="entry name" value="UPF0229 PROTEIN YEAH"/>
    <property type="match status" value="1"/>
</dbReference>
<dbReference type="Pfam" id="PF04285">
    <property type="entry name" value="DUF444"/>
    <property type="match status" value="1"/>
</dbReference>
<feature type="chain" id="PRO_1000066887" description="UPF0229 protein YpsIP31758_1992">
    <location>
        <begin position="1"/>
        <end position="424"/>
    </location>
</feature>
<feature type="region of interest" description="Disordered" evidence="2">
    <location>
        <begin position="84"/>
        <end position="109"/>
    </location>
</feature>
<feature type="compositionally biased region" description="Gly residues" evidence="2">
    <location>
        <begin position="92"/>
        <end position="105"/>
    </location>
</feature>
<organism>
    <name type="scientific">Yersinia pseudotuberculosis serotype O:1b (strain IP 31758)</name>
    <dbReference type="NCBI Taxonomy" id="349747"/>
    <lineage>
        <taxon>Bacteria</taxon>
        <taxon>Pseudomonadati</taxon>
        <taxon>Pseudomonadota</taxon>
        <taxon>Gammaproteobacteria</taxon>
        <taxon>Enterobacterales</taxon>
        <taxon>Yersiniaceae</taxon>
        <taxon>Yersinia</taxon>
    </lineage>
</organism>
<gene>
    <name type="ordered locus">YpsIP31758_1992</name>
</gene>
<sequence>MGYFIDRRLNGKNKSMVNRQRFLRRYKSQIKQSIADAINKRSVTDIESGESVSIPIDDINEPMFHQGNGGLRHRVHPGNDHFITNDRVDRPQGGGGGGSGQGNAGKDGEGEDEFVFQISKDEYLDLLFEDLALPNLKRNQYKQLAEFKTHRAGYTSNGVPANISVVRSLQNSLARRTAMTASKRRELRELEAALTVLENSEPAQLLEEERLRKAITELKQKIARVPFIDTFDLRYKNYERRPEPSSQAVMFCLMDVSGSMDQATKDMAKRFYILLYLFLSRTYKNVDVVYIRHHTQAKEVDEQEFFYSQETGGTIVSSALKLMDEVVQERYNPAQWNIYAAQASDGDNWADDSPLCHELLAKKILPVVRYYSYIEITRRAHQTLWREYEDLEEKFDNFAIQHIREPEDIYPVFRELFHKQTVDN</sequence>
<comment type="similarity">
    <text evidence="1">Belongs to the UPF0229 family.</text>
</comment>